<feature type="signal peptide" evidence="1">
    <location>
        <begin position="1"/>
        <end position="25"/>
    </location>
</feature>
<feature type="chain" id="PRO_0000336659" description="Outer-membrane lipoprotein carrier protein">
    <location>
        <begin position="26"/>
        <end position="212"/>
    </location>
</feature>
<dbReference type="EMBL" id="CP000090">
    <property type="protein sequence ID" value="AAZ61960.1"/>
    <property type="molecule type" value="Genomic_DNA"/>
</dbReference>
<dbReference type="SMR" id="Q46Y23"/>
<dbReference type="STRING" id="264198.Reut_A2599"/>
<dbReference type="KEGG" id="reu:Reut_A2599"/>
<dbReference type="eggNOG" id="COG2834">
    <property type="taxonomic scope" value="Bacteria"/>
</dbReference>
<dbReference type="HOGENOM" id="CLU_087560_0_1_4"/>
<dbReference type="OrthoDB" id="9787361at2"/>
<dbReference type="GO" id="GO:0042597">
    <property type="term" value="C:periplasmic space"/>
    <property type="evidence" value="ECO:0007669"/>
    <property type="project" value="UniProtKB-SubCell"/>
</dbReference>
<dbReference type="GO" id="GO:0044874">
    <property type="term" value="P:lipoprotein localization to outer membrane"/>
    <property type="evidence" value="ECO:0007669"/>
    <property type="project" value="UniProtKB-UniRule"/>
</dbReference>
<dbReference type="GO" id="GO:0042953">
    <property type="term" value="P:lipoprotein transport"/>
    <property type="evidence" value="ECO:0007669"/>
    <property type="project" value="InterPro"/>
</dbReference>
<dbReference type="CDD" id="cd16325">
    <property type="entry name" value="LolA"/>
    <property type="match status" value="1"/>
</dbReference>
<dbReference type="Gene3D" id="2.50.20.10">
    <property type="entry name" value="Lipoprotein localisation LolA/LolB/LppX"/>
    <property type="match status" value="1"/>
</dbReference>
<dbReference type="HAMAP" id="MF_00240">
    <property type="entry name" value="LolA"/>
    <property type="match status" value="1"/>
</dbReference>
<dbReference type="InterPro" id="IPR029046">
    <property type="entry name" value="LolA/LolB/LppX"/>
</dbReference>
<dbReference type="InterPro" id="IPR004564">
    <property type="entry name" value="OM_lipoprot_carrier_LolA-like"/>
</dbReference>
<dbReference type="InterPro" id="IPR018323">
    <property type="entry name" value="OM_lipoprot_carrier_LolA_Pbac"/>
</dbReference>
<dbReference type="NCBIfam" id="TIGR00547">
    <property type="entry name" value="lolA"/>
    <property type="match status" value="1"/>
</dbReference>
<dbReference type="NCBIfam" id="NF000661">
    <property type="entry name" value="PRK00031.1-3"/>
    <property type="match status" value="1"/>
</dbReference>
<dbReference type="PANTHER" id="PTHR35869">
    <property type="entry name" value="OUTER-MEMBRANE LIPOPROTEIN CARRIER PROTEIN"/>
    <property type="match status" value="1"/>
</dbReference>
<dbReference type="PANTHER" id="PTHR35869:SF1">
    <property type="entry name" value="OUTER-MEMBRANE LIPOPROTEIN CARRIER PROTEIN"/>
    <property type="match status" value="1"/>
</dbReference>
<dbReference type="Pfam" id="PF03548">
    <property type="entry name" value="LolA"/>
    <property type="match status" value="1"/>
</dbReference>
<dbReference type="SUPFAM" id="SSF89392">
    <property type="entry name" value="Prokaryotic lipoproteins and lipoprotein localization factors"/>
    <property type="match status" value="1"/>
</dbReference>
<proteinExistence type="inferred from homology"/>
<sequence length="212" mass="23138">MRKRILVSACAALAVFAAHMPTALAAATDQLQSFVTGVKSAKGEFTQRQVKGQGDSLKVTGTSSGSFVFSRPGKFTWRYAKPYEQLLQADGQTLYIYDKDLNQVTERKLDGALGSSPAAILFGSNDLEKNFTVKNGPTRDGVEWLELTPKSKDTQFERIGIGFKGGNLEAMELRDAFGNTTLLTFSAMQKNPQLPANAFRFTVPKGADVMKQ</sequence>
<organism>
    <name type="scientific">Cupriavidus pinatubonensis (strain JMP 134 / LMG 1197)</name>
    <name type="common">Cupriavidus necator (strain JMP 134)</name>
    <dbReference type="NCBI Taxonomy" id="264198"/>
    <lineage>
        <taxon>Bacteria</taxon>
        <taxon>Pseudomonadati</taxon>
        <taxon>Pseudomonadota</taxon>
        <taxon>Betaproteobacteria</taxon>
        <taxon>Burkholderiales</taxon>
        <taxon>Burkholderiaceae</taxon>
        <taxon>Cupriavidus</taxon>
    </lineage>
</organism>
<reference key="1">
    <citation type="journal article" date="2010" name="PLoS ONE">
        <title>The complete multipartite genome sequence of Cupriavidus necator JMP134, a versatile pollutant degrader.</title>
        <authorList>
            <person name="Lykidis A."/>
            <person name="Perez-Pantoja D."/>
            <person name="Ledger T."/>
            <person name="Mavromatis K."/>
            <person name="Anderson I.J."/>
            <person name="Ivanova N.N."/>
            <person name="Hooper S.D."/>
            <person name="Lapidus A."/>
            <person name="Lucas S."/>
            <person name="Gonzalez B."/>
            <person name="Kyrpides N.C."/>
        </authorList>
    </citation>
    <scope>NUCLEOTIDE SEQUENCE [LARGE SCALE GENOMIC DNA]</scope>
    <source>
        <strain>JMP134 / LMG 1197</strain>
    </source>
</reference>
<accession>Q46Y23</accession>
<comment type="function">
    <text evidence="1">Participates in the translocation of lipoproteins from the inner membrane to the outer membrane. Only forms a complex with a lipoprotein if the residue after the N-terminal Cys is not an aspartate (The Asp acts as a targeting signal to indicate that the lipoprotein should stay in the inner membrane).</text>
</comment>
<comment type="subunit">
    <text evidence="1">Monomer.</text>
</comment>
<comment type="subcellular location">
    <subcellularLocation>
        <location evidence="1">Periplasm</location>
    </subcellularLocation>
</comment>
<comment type="similarity">
    <text evidence="1">Belongs to the LolA family.</text>
</comment>
<gene>
    <name evidence="1" type="primary">lolA</name>
    <name type="ordered locus">Reut_A2599</name>
</gene>
<protein>
    <recommendedName>
        <fullName evidence="1">Outer-membrane lipoprotein carrier protein</fullName>
    </recommendedName>
</protein>
<evidence type="ECO:0000255" key="1">
    <source>
        <dbReference type="HAMAP-Rule" id="MF_00240"/>
    </source>
</evidence>
<keyword id="KW-0143">Chaperone</keyword>
<keyword id="KW-0574">Periplasm</keyword>
<keyword id="KW-0653">Protein transport</keyword>
<keyword id="KW-0732">Signal</keyword>
<keyword id="KW-0813">Transport</keyword>
<name>LOLA_CUPPJ</name>